<protein>
    <recommendedName>
        <fullName evidence="1">Histidine ammonia-lyase</fullName>
        <shortName evidence="1">Histidase</shortName>
        <ecNumber evidence="1">4.3.1.3</ecNumber>
    </recommendedName>
</protein>
<feature type="chain" id="PRO_0000161044" description="Histidine ammonia-lyase">
    <location>
        <begin position="1"/>
        <end position="508"/>
    </location>
</feature>
<feature type="modified residue" description="2,3-didehydroalanine (Ser)" evidence="1">
    <location>
        <position position="144"/>
    </location>
</feature>
<feature type="cross-link" description="5-imidazolinone (Ala-Gly)" evidence="1">
    <location>
        <begin position="143"/>
        <end position="145"/>
    </location>
</feature>
<evidence type="ECO:0000255" key="1">
    <source>
        <dbReference type="HAMAP-Rule" id="MF_00229"/>
    </source>
</evidence>
<gene>
    <name evidence="1" type="primary">hutH</name>
    <name type="ordered locus">TTE0844</name>
</gene>
<reference key="1">
    <citation type="journal article" date="2002" name="Genome Res.">
        <title>A complete sequence of the T. tengcongensis genome.</title>
        <authorList>
            <person name="Bao Q."/>
            <person name="Tian Y."/>
            <person name="Li W."/>
            <person name="Xu Z."/>
            <person name="Xuan Z."/>
            <person name="Hu S."/>
            <person name="Dong W."/>
            <person name="Yang J."/>
            <person name="Chen Y."/>
            <person name="Xue Y."/>
            <person name="Xu Y."/>
            <person name="Lai X."/>
            <person name="Huang L."/>
            <person name="Dong X."/>
            <person name="Ma Y."/>
            <person name="Ling L."/>
            <person name="Tan H."/>
            <person name="Chen R."/>
            <person name="Wang J."/>
            <person name="Yu J."/>
            <person name="Yang H."/>
        </authorList>
    </citation>
    <scope>NUCLEOTIDE SEQUENCE [LARGE SCALE GENOMIC DNA]</scope>
    <source>
        <strain>DSM 15242 / JCM 11007 / NBRC 100824 / MB4</strain>
    </source>
</reference>
<dbReference type="EC" id="4.3.1.3" evidence="1"/>
<dbReference type="EMBL" id="AE008691">
    <property type="protein sequence ID" value="AAM24101.1"/>
    <property type="molecule type" value="Genomic_DNA"/>
</dbReference>
<dbReference type="RefSeq" id="WP_011025234.1">
    <property type="nucleotide sequence ID" value="NC_003869.1"/>
</dbReference>
<dbReference type="SMR" id="Q8RBH4"/>
<dbReference type="STRING" id="273068.TTE0844"/>
<dbReference type="KEGG" id="tte:TTE0844"/>
<dbReference type="eggNOG" id="COG2986">
    <property type="taxonomic scope" value="Bacteria"/>
</dbReference>
<dbReference type="HOGENOM" id="CLU_014801_4_0_9"/>
<dbReference type="OrthoDB" id="9806955at2"/>
<dbReference type="UniPathway" id="UPA00379">
    <property type="reaction ID" value="UER00549"/>
</dbReference>
<dbReference type="Proteomes" id="UP000000555">
    <property type="component" value="Chromosome"/>
</dbReference>
<dbReference type="GO" id="GO:0005737">
    <property type="term" value="C:cytoplasm"/>
    <property type="evidence" value="ECO:0007669"/>
    <property type="project" value="UniProtKB-SubCell"/>
</dbReference>
<dbReference type="GO" id="GO:0004397">
    <property type="term" value="F:histidine ammonia-lyase activity"/>
    <property type="evidence" value="ECO:0007669"/>
    <property type="project" value="UniProtKB-UniRule"/>
</dbReference>
<dbReference type="GO" id="GO:0019556">
    <property type="term" value="P:L-histidine catabolic process to glutamate and formamide"/>
    <property type="evidence" value="ECO:0007669"/>
    <property type="project" value="UniProtKB-UniPathway"/>
</dbReference>
<dbReference type="GO" id="GO:0019557">
    <property type="term" value="P:L-histidine catabolic process to glutamate and formate"/>
    <property type="evidence" value="ECO:0007669"/>
    <property type="project" value="UniProtKB-UniPathway"/>
</dbReference>
<dbReference type="CDD" id="cd00332">
    <property type="entry name" value="PAL-HAL"/>
    <property type="match status" value="1"/>
</dbReference>
<dbReference type="FunFam" id="1.10.275.10:FF:000005">
    <property type="entry name" value="Histidine ammonia-lyase"/>
    <property type="match status" value="1"/>
</dbReference>
<dbReference type="FunFam" id="1.20.200.10:FF:000003">
    <property type="entry name" value="Histidine ammonia-lyase"/>
    <property type="match status" value="1"/>
</dbReference>
<dbReference type="Gene3D" id="1.20.200.10">
    <property type="entry name" value="Fumarase/aspartase (Central domain)"/>
    <property type="match status" value="1"/>
</dbReference>
<dbReference type="Gene3D" id="1.10.275.10">
    <property type="entry name" value="Fumarase/aspartase (N-terminal domain)"/>
    <property type="match status" value="1"/>
</dbReference>
<dbReference type="HAMAP" id="MF_00229">
    <property type="entry name" value="His_ammonia_lyase"/>
    <property type="match status" value="1"/>
</dbReference>
<dbReference type="InterPro" id="IPR001106">
    <property type="entry name" value="Aromatic_Lyase"/>
</dbReference>
<dbReference type="InterPro" id="IPR024083">
    <property type="entry name" value="Fumarase/histidase_N"/>
</dbReference>
<dbReference type="InterPro" id="IPR005921">
    <property type="entry name" value="HutH"/>
</dbReference>
<dbReference type="InterPro" id="IPR008948">
    <property type="entry name" value="L-Aspartase-like"/>
</dbReference>
<dbReference type="InterPro" id="IPR022313">
    <property type="entry name" value="Phe/His_NH3-lyase_AS"/>
</dbReference>
<dbReference type="NCBIfam" id="TIGR01225">
    <property type="entry name" value="hutH"/>
    <property type="match status" value="1"/>
</dbReference>
<dbReference type="NCBIfam" id="NF006871">
    <property type="entry name" value="PRK09367.1"/>
    <property type="match status" value="1"/>
</dbReference>
<dbReference type="PANTHER" id="PTHR10362">
    <property type="entry name" value="HISTIDINE AMMONIA-LYASE"/>
    <property type="match status" value="1"/>
</dbReference>
<dbReference type="Pfam" id="PF00221">
    <property type="entry name" value="Lyase_aromatic"/>
    <property type="match status" value="1"/>
</dbReference>
<dbReference type="SUPFAM" id="SSF48557">
    <property type="entry name" value="L-aspartase-like"/>
    <property type="match status" value="1"/>
</dbReference>
<dbReference type="PROSITE" id="PS00488">
    <property type="entry name" value="PAL_HISTIDASE"/>
    <property type="match status" value="1"/>
</dbReference>
<name>HUTH_CALS4</name>
<accession>Q8RBH4</accession>
<comment type="catalytic activity">
    <reaction evidence="1">
        <text>L-histidine = trans-urocanate + NH4(+)</text>
        <dbReference type="Rhea" id="RHEA:21232"/>
        <dbReference type="ChEBI" id="CHEBI:17771"/>
        <dbReference type="ChEBI" id="CHEBI:28938"/>
        <dbReference type="ChEBI" id="CHEBI:57595"/>
        <dbReference type="EC" id="4.3.1.3"/>
    </reaction>
</comment>
<comment type="pathway">
    <text evidence="1">Amino-acid degradation; L-histidine degradation into L-glutamate; N-formimidoyl-L-glutamate from L-histidine: step 1/3.</text>
</comment>
<comment type="subcellular location">
    <subcellularLocation>
        <location evidence="1">Cytoplasm</location>
    </subcellularLocation>
</comment>
<comment type="PTM">
    <text evidence="1">Contains an active site 4-methylidene-imidazol-5-one (MIO), which is formed autocatalytically by cyclization and dehydration of residues Ala-Ser-Gly.</text>
</comment>
<comment type="similarity">
    <text evidence="1">Belongs to the PAL/histidase family.</text>
</comment>
<organism>
    <name type="scientific">Caldanaerobacter subterraneus subsp. tengcongensis (strain DSM 15242 / JCM 11007 / NBRC 100824 / MB4)</name>
    <name type="common">Thermoanaerobacter tengcongensis</name>
    <dbReference type="NCBI Taxonomy" id="273068"/>
    <lineage>
        <taxon>Bacteria</taxon>
        <taxon>Bacillati</taxon>
        <taxon>Bacillota</taxon>
        <taxon>Clostridia</taxon>
        <taxon>Thermoanaerobacterales</taxon>
        <taxon>Thermoanaerobacteraceae</taxon>
        <taxon>Caldanaerobacter</taxon>
    </lineage>
</organism>
<proteinExistence type="inferred from homology"/>
<keyword id="KW-0963">Cytoplasm</keyword>
<keyword id="KW-0369">Histidine metabolism</keyword>
<keyword id="KW-0456">Lyase</keyword>
<keyword id="KW-1185">Reference proteome</keyword>
<sequence length="508" mass="55570">MKKVVIDGNNLTIEDVVKVARDKWEVVLSEVAKERIVHSREIVDRYVKEGKVVYGITTGFGKFSDVVISKEDTEALQKNLIMSHSCAVGDPLPEEVVRAIMLLRANALAKGFSGVRLETVETLIEMINKNVVPVIPEKGSLGASGDLAPLAHMVLVMIGRGEAFYAGERVSGEEAMRRAGIPTITLSSKEGLALINGTQVMSALGCLNVYDAKRIIAVADAVASITLEALRGIIDAFDDRVQMVRPHKGQIVSAKNVRKMVEGSELITRQGEIRVQDAYTLRCIPQVHGAVRDAISYIERVLGVEINSATDNPLIFPDDGEVISGGNFHGEPVALAMDFLSIALSEIANISERRIERLVNYQLNDLPPFLTEKGGLNSGMMIAQYTAASLVSENKVLSHPASVDSIPSSANQEDHVSMGTIAARKAREVLKNVTTVLAIELLTASQALEFRKGFKRGKGTDRIYRLVREKVNPLVEDRELYIDINACFDIIRSGRIEEVLKEEGIMLE</sequence>